<name>PSBF_LACFR</name>
<evidence type="ECO:0000255" key="1">
    <source>
        <dbReference type="HAMAP-Rule" id="MF_00643"/>
    </source>
</evidence>
<keyword id="KW-0150">Chloroplast</keyword>
<keyword id="KW-0249">Electron transport</keyword>
<keyword id="KW-0349">Heme</keyword>
<keyword id="KW-0408">Iron</keyword>
<keyword id="KW-0472">Membrane</keyword>
<keyword id="KW-0479">Metal-binding</keyword>
<keyword id="KW-0602">Photosynthesis</keyword>
<keyword id="KW-0604">Photosystem II</keyword>
<keyword id="KW-0934">Plastid</keyword>
<keyword id="KW-0793">Thylakoid</keyword>
<keyword id="KW-0812">Transmembrane</keyword>
<keyword id="KW-1133">Transmembrane helix</keyword>
<keyword id="KW-0813">Transport</keyword>
<dbReference type="EMBL" id="AF123839">
    <property type="protein sequence ID" value="AAG26235.1"/>
    <property type="molecule type" value="Genomic_DNA"/>
</dbReference>
<dbReference type="RefSeq" id="YP_010447650.1">
    <property type="nucleotide sequence ID" value="NC_065383.1"/>
</dbReference>
<dbReference type="SMR" id="Q7J1A7"/>
<dbReference type="GeneID" id="73954358"/>
<dbReference type="GO" id="GO:0009535">
    <property type="term" value="C:chloroplast thylakoid membrane"/>
    <property type="evidence" value="ECO:0007669"/>
    <property type="project" value="UniProtKB-SubCell"/>
</dbReference>
<dbReference type="GO" id="GO:0009539">
    <property type="term" value="C:photosystem II reaction center"/>
    <property type="evidence" value="ECO:0007669"/>
    <property type="project" value="InterPro"/>
</dbReference>
<dbReference type="GO" id="GO:0009055">
    <property type="term" value="F:electron transfer activity"/>
    <property type="evidence" value="ECO:0007669"/>
    <property type="project" value="UniProtKB-UniRule"/>
</dbReference>
<dbReference type="GO" id="GO:0020037">
    <property type="term" value="F:heme binding"/>
    <property type="evidence" value="ECO:0007669"/>
    <property type="project" value="InterPro"/>
</dbReference>
<dbReference type="GO" id="GO:0005506">
    <property type="term" value="F:iron ion binding"/>
    <property type="evidence" value="ECO:0007669"/>
    <property type="project" value="UniProtKB-UniRule"/>
</dbReference>
<dbReference type="GO" id="GO:0009767">
    <property type="term" value="P:photosynthetic electron transport chain"/>
    <property type="evidence" value="ECO:0007669"/>
    <property type="project" value="InterPro"/>
</dbReference>
<dbReference type="HAMAP" id="MF_00643">
    <property type="entry name" value="PSII_PsbF"/>
    <property type="match status" value="1"/>
</dbReference>
<dbReference type="InterPro" id="IPR006241">
    <property type="entry name" value="PSII_cyt_b559_bsu"/>
</dbReference>
<dbReference type="InterPro" id="IPR006216">
    <property type="entry name" value="PSII_cyt_b559_CS"/>
</dbReference>
<dbReference type="InterPro" id="IPR013081">
    <property type="entry name" value="PSII_cyt_b559_N"/>
</dbReference>
<dbReference type="NCBIfam" id="TIGR01333">
    <property type="entry name" value="cyt_b559_beta"/>
    <property type="match status" value="1"/>
</dbReference>
<dbReference type="Pfam" id="PF00283">
    <property type="entry name" value="Cytochrom_B559"/>
    <property type="match status" value="1"/>
</dbReference>
<dbReference type="PIRSF" id="PIRSF000037">
    <property type="entry name" value="PsbF"/>
    <property type="match status" value="1"/>
</dbReference>
<dbReference type="SUPFAM" id="SSF161045">
    <property type="entry name" value="Cytochrome b559 subunits"/>
    <property type="match status" value="1"/>
</dbReference>
<dbReference type="PROSITE" id="PS00537">
    <property type="entry name" value="CYTOCHROME_B559"/>
    <property type="match status" value="1"/>
</dbReference>
<proteinExistence type="inferred from homology"/>
<comment type="function">
    <text evidence="1">This b-type cytochrome is tightly associated with the reaction center of photosystem II (PSII). PSII is a light-driven water:plastoquinone oxidoreductase that uses light energy to abstract electrons from H(2)O, generating O(2) and a proton gradient subsequently used for ATP formation. It consists of a core antenna complex that captures photons, and an electron transfer chain that converts photonic excitation into a charge separation.</text>
</comment>
<comment type="cofactor">
    <cofactor evidence="1">
        <name>heme b</name>
        <dbReference type="ChEBI" id="CHEBI:60344"/>
    </cofactor>
    <text evidence="1">With its partner (PsbE) binds heme. PSII binds additional chlorophylls, carotenoids and specific lipids.</text>
</comment>
<comment type="subunit">
    <text evidence="1">Heterodimer of an alpha subunit and a beta subunit. PSII is composed of 1 copy each of membrane proteins PsbA, PsbB, PsbC, PsbD, PsbE, PsbF, PsbH, PsbI, PsbJ, PsbK, PsbL, PsbM, PsbT, PsbX, PsbY, PsbZ, Psb30/Ycf12, at least 3 peripheral proteins of the oxygen-evolving complex and a large number of cofactors. It forms dimeric complexes.</text>
</comment>
<comment type="subcellular location">
    <subcellularLocation>
        <location evidence="1">Plastid</location>
        <location evidence="1">Chloroplast thylakoid membrane</location>
        <topology evidence="1">Single-pass membrane protein</topology>
    </subcellularLocation>
</comment>
<comment type="similarity">
    <text evidence="1">Belongs to the PsbE/PsbF family.</text>
</comment>
<sequence length="39" mass="4484">MTIDRTYPIFTVRWLAVHGLAVPTVFFLGSISAMQFIQR</sequence>
<organism>
    <name type="scientific">Lactoris fernandeziana</name>
    <dbReference type="NCBI Taxonomy" id="22303"/>
    <lineage>
        <taxon>Eukaryota</taxon>
        <taxon>Viridiplantae</taxon>
        <taxon>Streptophyta</taxon>
        <taxon>Embryophyta</taxon>
        <taxon>Tracheophyta</taxon>
        <taxon>Spermatophyta</taxon>
        <taxon>Magnoliopsida</taxon>
        <taxon>Magnoliidae</taxon>
        <taxon>Piperales</taxon>
        <taxon>Lactoridaceae</taxon>
        <taxon>Lactoris</taxon>
    </lineage>
</organism>
<feature type="chain" id="PRO_0000200411" description="Cytochrome b559 subunit beta">
    <location>
        <begin position="1"/>
        <end position="39"/>
    </location>
</feature>
<feature type="transmembrane region" description="Helical" evidence="1">
    <location>
        <begin position="14"/>
        <end position="30"/>
    </location>
</feature>
<feature type="binding site" description="axial binding residue" evidence="1">
    <location>
        <position position="18"/>
    </location>
    <ligand>
        <name>heme</name>
        <dbReference type="ChEBI" id="CHEBI:30413"/>
        <note>ligand shared with alpha subunit</note>
    </ligand>
    <ligandPart>
        <name>Fe</name>
        <dbReference type="ChEBI" id="CHEBI:18248"/>
    </ligandPart>
</feature>
<reference key="1">
    <citation type="journal article" date="2000" name="Am. J. Bot.">
        <title>Utility of 17 chloroplast genes for inferring the phylogeny of the basal angiosperms.</title>
        <authorList>
            <person name="Graham S.W."/>
            <person name="Olmstead R.G."/>
        </authorList>
    </citation>
    <scope>NUCLEOTIDE SEQUENCE [GENOMIC DNA]</scope>
</reference>
<accession>Q7J1A7</accession>
<protein>
    <recommendedName>
        <fullName evidence="1">Cytochrome b559 subunit beta</fullName>
    </recommendedName>
    <alternativeName>
        <fullName evidence="1">PSII reaction center subunit VI</fullName>
    </alternativeName>
</protein>
<gene>
    <name evidence="1" type="primary">psbF</name>
</gene>
<geneLocation type="chloroplast"/>